<sequence>MTQQIKLLVLNGPNLNLLGQREPEVYGSKTLDDIIKALTDEAALQNVALSHLQSNREYELIEKIHDAFEKIDFIIINPAAFTHTSVALRDALLGVNIPFIEVHLSNVHARESFRHHSYLSDIAQGVICGLGAKGYSFALQSAIGKLRNI</sequence>
<accession>A1SZA3</accession>
<proteinExistence type="evidence at protein level"/>
<dbReference type="EC" id="4.2.1.10" evidence="1"/>
<dbReference type="EMBL" id="CP000510">
    <property type="protein sequence ID" value="ABM04818.1"/>
    <property type="molecule type" value="Genomic_DNA"/>
</dbReference>
<dbReference type="RefSeq" id="WP_011771372.1">
    <property type="nucleotide sequence ID" value="NC_008709.1"/>
</dbReference>
<dbReference type="PDB" id="6HSQ">
    <property type="method" value="X-ray"/>
    <property type="resolution" value="1.46 A"/>
    <property type="chains" value="A/B/C/D=1-149"/>
</dbReference>
<dbReference type="PDB" id="6HSR">
    <property type="method" value="X-ray"/>
    <property type="resolution" value="2.00 A"/>
    <property type="chains" value="A/B/C/D=1-149"/>
</dbReference>
<dbReference type="PDB" id="6HSU">
    <property type="method" value="X-ray"/>
    <property type="resolution" value="1.60 A"/>
    <property type="chains" value="A/B/C/D/E/F/G/H/I/J/K/L=1-149"/>
</dbReference>
<dbReference type="PDBsum" id="6HSQ"/>
<dbReference type="PDBsum" id="6HSR"/>
<dbReference type="PDBsum" id="6HSU"/>
<dbReference type="SMR" id="A1SZA3"/>
<dbReference type="STRING" id="357804.Ping_3121"/>
<dbReference type="KEGG" id="pin:Ping_3121"/>
<dbReference type="eggNOG" id="COG0757">
    <property type="taxonomic scope" value="Bacteria"/>
</dbReference>
<dbReference type="HOGENOM" id="CLU_090968_1_0_6"/>
<dbReference type="OrthoDB" id="9790793at2"/>
<dbReference type="BRENDA" id="4.2.1.10">
    <property type="organism ID" value="11857"/>
</dbReference>
<dbReference type="UniPathway" id="UPA00053">
    <property type="reaction ID" value="UER00086"/>
</dbReference>
<dbReference type="Proteomes" id="UP000000639">
    <property type="component" value="Chromosome"/>
</dbReference>
<dbReference type="GO" id="GO:0003855">
    <property type="term" value="F:3-dehydroquinate dehydratase activity"/>
    <property type="evidence" value="ECO:0007669"/>
    <property type="project" value="UniProtKB-UniRule"/>
</dbReference>
<dbReference type="GO" id="GO:0008652">
    <property type="term" value="P:amino acid biosynthetic process"/>
    <property type="evidence" value="ECO:0007669"/>
    <property type="project" value="UniProtKB-KW"/>
</dbReference>
<dbReference type="GO" id="GO:0009073">
    <property type="term" value="P:aromatic amino acid family biosynthetic process"/>
    <property type="evidence" value="ECO:0007669"/>
    <property type="project" value="UniProtKB-KW"/>
</dbReference>
<dbReference type="GO" id="GO:0009423">
    <property type="term" value="P:chorismate biosynthetic process"/>
    <property type="evidence" value="ECO:0007669"/>
    <property type="project" value="UniProtKB-UniRule"/>
</dbReference>
<dbReference type="GO" id="GO:0019631">
    <property type="term" value="P:quinate catabolic process"/>
    <property type="evidence" value="ECO:0007669"/>
    <property type="project" value="TreeGrafter"/>
</dbReference>
<dbReference type="CDD" id="cd00466">
    <property type="entry name" value="DHQase_II"/>
    <property type="match status" value="1"/>
</dbReference>
<dbReference type="Gene3D" id="3.40.50.9100">
    <property type="entry name" value="Dehydroquinase, class II"/>
    <property type="match status" value="1"/>
</dbReference>
<dbReference type="HAMAP" id="MF_00169">
    <property type="entry name" value="AroQ"/>
    <property type="match status" value="1"/>
</dbReference>
<dbReference type="InterPro" id="IPR001874">
    <property type="entry name" value="DHquinase_II"/>
</dbReference>
<dbReference type="InterPro" id="IPR018509">
    <property type="entry name" value="DHquinase_II_CS"/>
</dbReference>
<dbReference type="InterPro" id="IPR036441">
    <property type="entry name" value="DHquinase_II_sf"/>
</dbReference>
<dbReference type="NCBIfam" id="TIGR01088">
    <property type="entry name" value="aroQ"/>
    <property type="match status" value="1"/>
</dbReference>
<dbReference type="NCBIfam" id="NF003804">
    <property type="entry name" value="PRK05395.1-1"/>
    <property type="match status" value="1"/>
</dbReference>
<dbReference type="NCBIfam" id="NF003805">
    <property type="entry name" value="PRK05395.1-2"/>
    <property type="match status" value="1"/>
</dbReference>
<dbReference type="NCBIfam" id="NF003806">
    <property type="entry name" value="PRK05395.1-3"/>
    <property type="match status" value="1"/>
</dbReference>
<dbReference type="NCBIfam" id="NF003807">
    <property type="entry name" value="PRK05395.1-4"/>
    <property type="match status" value="1"/>
</dbReference>
<dbReference type="PANTHER" id="PTHR21272">
    <property type="entry name" value="CATABOLIC 3-DEHYDROQUINASE"/>
    <property type="match status" value="1"/>
</dbReference>
<dbReference type="PANTHER" id="PTHR21272:SF3">
    <property type="entry name" value="CATABOLIC 3-DEHYDROQUINASE"/>
    <property type="match status" value="1"/>
</dbReference>
<dbReference type="Pfam" id="PF01220">
    <property type="entry name" value="DHquinase_II"/>
    <property type="match status" value="1"/>
</dbReference>
<dbReference type="PIRSF" id="PIRSF001399">
    <property type="entry name" value="DHquinase_II"/>
    <property type="match status" value="1"/>
</dbReference>
<dbReference type="SUPFAM" id="SSF52304">
    <property type="entry name" value="Type II 3-dehydroquinate dehydratase"/>
    <property type="match status" value="1"/>
</dbReference>
<dbReference type="PROSITE" id="PS01029">
    <property type="entry name" value="DEHYDROQUINASE_II"/>
    <property type="match status" value="1"/>
</dbReference>
<protein>
    <recommendedName>
        <fullName evidence="1">3-dehydroquinate dehydratase</fullName>
        <shortName evidence="1">3-dehydroquinase</shortName>
        <ecNumber evidence="1">4.2.1.10</ecNumber>
    </recommendedName>
    <alternativeName>
        <fullName evidence="1">Type II DHQase</fullName>
    </alternativeName>
</protein>
<gene>
    <name evidence="1" type="primary">aroQ</name>
    <name type="ordered locus">Ping_3121</name>
</gene>
<organism>
    <name type="scientific">Psychromonas ingrahamii (strain DSM 17664 / CCUG 51855 / 37)</name>
    <dbReference type="NCBI Taxonomy" id="357804"/>
    <lineage>
        <taxon>Bacteria</taxon>
        <taxon>Pseudomonadati</taxon>
        <taxon>Pseudomonadota</taxon>
        <taxon>Gammaproteobacteria</taxon>
        <taxon>Alteromonadales</taxon>
        <taxon>Psychromonadaceae</taxon>
        <taxon>Psychromonas</taxon>
    </lineage>
</organism>
<reference key="1">
    <citation type="journal article" date="2008" name="BMC Genomics">
        <title>Genomics of an extreme psychrophile, Psychromonas ingrahamii.</title>
        <authorList>
            <person name="Riley M."/>
            <person name="Staley J.T."/>
            <person name="Danchin A."/>
            <person name="Wang T.Z."/>
            <person name="Brettin T.S."/>
            <person name="Hauser L.J."/>
            <person name="Land M.L."/>
            <person name="Thompson L.S."/>
        </authorList>
    </citation>
    <scope>NUCLEOTIDE SEQUENCE [LARGE SCALE GENOMIC DNA]</scope>
    <source>
        <strain>DSM 17664 / CCUG 51855 / 37</strain>
    </source>
</reference>
<evidence type="ECO:0000255" key="1">
    <source>
        <dbReference type="HAMAP-Rule" id="MF_00169"/>
    </source>
</evidence>
<evidence type="ECO:0007829" key="2">
    <source>
        <dbReference type="PDB" id="6HSQ"/>
    </source>
</evidence>
<feature type="chain" id="PRO_1000023501" description="3-dehydroquinate dehydratase">
    <location>
        <begin position="1"/>
        <end position="149"/>
    </location>
</feature>
<feature type="active site" description="Proton acceptor" evidence="1">
    <location>
        <position position="26"/>
    </location>
</feature>
<feature type="active site" description="Proton donor" evidence="1">
    <location>
        <position position="103"/>
    </location>
</feature>
<feature type="binding site" evidence="1">
    <location>
        <position position="77"/>
    </location>
    <ligand>
        <name>substrate</name>
    </ligand>
</feature>
<feature type="binding site" evidence="1">
    <location>
        <position position="83"/>
    </location>
    <ligand>
        <name>substrate</name>
    </ligand>
</feature>
<feature type="binding site" evidence="1">
    <location>
        <position position="90"/>
    </location>
    <ligand>
        <name>substrate</name>
    </ligand>
</feature>
<feature type="binding site" evidence="1">
    <location>
        <begin position="104"/>
        <end position="105"/>
    </location>
    <ligand>
        <name>substrate</name>
    </ligand>
</feature>
<feature type="binding site" evidence="1">
    <location>
        <position position="114"/>
    </location>
    <ligand>
        <name>substrate</name>
    </ligand>
</feature>
<feature type="site" description="Transition state stabilizer" evidence="1">
    <location>
        <position position="21"/>
    </location>
</feature>
<feature type="strand" evidence="2">
    <location>
        <begin position="5"/>
        <end position="11"/>
    </location>
</feature>
<feature type="helix" evidence="2">
    <location>
        <begin position="15"/>
        <end position="17"/>
    </location>
</feature>
<feature type="turn" evidence="2">
    <location>
        <begin position="18"/>
        <end position="20"/>
    </location>
</feature>
<feature type="helix" evidence="2">
    <location>
        <begin position="23"/>
        <end position="26"/>
    </location>
</feature>
<feature type="helix" evidence="2">
    <location>
        <begin position="31"/>
        <end position="43"/>
    </location>
</feature>
<feature type="turn" evidence="2">
    <location>
        <begin position="44"/>
        <end position="46"/>
    </location>
</feature>
<feature type="strand" evidence="2">
    <location>
        <begin position="47"/>
        <end position="53"/>
    </location>
</feature>
<feature type="helix" evidence="2">
    <location>
        <begin position="57"/>
        <end position="67"/>
    </location>
</feature>
<feature type="turn" evidence="2">
    <location>
        <begin position="68"/>
        <end position="70"/>
    </location>
</feature>
<feature type="strand" evidence="2">
    <location>
        <begin position="72"/>
        <end position="77"/>
    </location>
</feature>
<feature type="helix" evidence="2">
    <location>
        <begin position="79"/>
        <end position="83"/>
    </location>
</feature>
<feature type="helix" evidence="2">
    <location>
        <begin position="86"/>
        <end position="95"/>
    </location>
</feature>
<feature type="strand" evidence="2">
    <location>
        <begin position="99"/>
        <end position="105"/>
    </location>
</feature>
<feature type="helix" evidence="2">
    <location>
        <begin position="107"/>
        <end position="109"/>
    </location>
</feature>
<feature type="helix" evidence="2">
    <location>
        <begin position="112"/>
        <end position="115"/>
    </location>
</feature>
<feature type="turn" evidence="2">
    <location>
        <begin position="120"/>
        <end position="122"/>
    </location>
</feature>
<feature type="strand" evidence="2">
    <location>
        <begin position="123"/>
        <end position="130"/>
    </location>
</feature>
<feature type="helix" evidence="2">
    <location>
        <begin position="133"/>
        <end position="147"/>
    </location>
</feature>
<name>AROQ_PSYIN</name>
<comment type="function">
    <text evidence="1">Catalyzes a trans-dehydration via an enolate intermediate.</text>
</comment>
<comment type="catalytic activity">
    <reaction evidence="1">
        <text>3-dehydroquinate = 3-dehydroshikimate + H2O</text>
        <dbReference type="Rhea" id="RHEA:21096"/>
        <dbReference type="ChEBI" id="CHEBI:15377"/>
        <dbReference type="ChEBI" id="CHEBI:16630"/>
        <dbReference type="ChEBI" id="CHEBI:32364"/>
        <dbReference type="EC" id="4.2.1.10"/>
    </reaction>
</comment>
<comment type="pathway">
    <text evidence="1">Metabolic intermediate biosynthesis; chorismate biosynthesis; chorismate from D-erythrose 4-phosphate and phosphoenolpyruvate: step 3/7.</text>
</comment>
<comment type="subunit">
    <text evidence="1">Homododecamer.</text>
</comment>
<comment type="similarity">
    <text evidence="1">Belongs to the type-II 3-dehydroquinase family.</text>
</comment>
<keyword id="KW-0002">3D-structure</keyword>
<keyword id="KW-0028">Amino-acid biosynthesis</keyword>
<keyword id="KW-0057">Aromatic amino acid biosynthesis</keyword>
<keyword id="KW-0456">Lyase</keyword>
<keyword id="KW-1185">Reference proteome</keyword>